<organism>
    <name type="scientific">Oncorhynchus keta</name>
    <name type="common">Chum salmon</name>
    <name type="synonym">Salmo keta</name>
    <dbReference type="NCBI Taxonomy" id="8018"/>
    <lineage>
        <taxon>Eukaryota</taxon>
        <taxon>Metazoa</taxon>
        <taxon>Chordata</taxon>
        <taxon>Craniata</taxon>
        <taxon>Vertebrata</taxon>
        <taxon>Euteleostomi</taxon>
        <taxon>Actinopterygii</taxon>
        <taxon>Neopterygii</taxon>
        <taxon>Teleostei</taxon>
        <taxon>Protacanthopterygii</taxon>
        <taxon>Salmoniformes</taxon>
        <taxon>Salmonidae</taxon>
        <taxon>Salmoninae</taxon>
        <taxon>Oncorhynchus</taxon>
    </lineage>
</organism>
<name>TBA_ONCKE</name>
<comment type="function">
    <text>Tubulin is the major constituent of microtubules, a cylinder consisting of laterally associated linear protofilaments composed of alpha- and beta-tubulin heterodimers. Microtubules grow by the addition of GTP-tubulin dimers to the microtubule end, where a stabilizing cap forms. Below the cap, tubulin dimers are in GDP-bound state, owing to GTPase activity of alpha-tubulin.</text>
</comment>
<comment type="catalytic activity">
    <reaction evidence="2">
        <text>GTP + H2O = GDP + phosphate + H(+)</text>
        <dbReference type="Rhea" id="RHEA:19669"/>
        <dbReference type="ChEBI" id="CHEBI:15377"/>
        <dbReference type="ChEBI" id="CHEBI:15378"/>
        <dbReference type="ChEBI" id="CHEBI:37565"/>
        <dbReference type="ChEBI" id="CHEBI:43474"/>
        <dbReference type="ChEBI" id="CHEBI:58189"/>
    </reaction>
    <physiologicalReaction direction="left-to-right" evidence="2">
        <dbReference type="Rhea" id="RHEA:19670"/>
    </physiologicalReaction>
</comment>
<comment type="cofactor">
    <cofactor evidence="2">
        <name>Mg(2+)</name>
        <dbReference type="ChEBI" id="CHEBI:18420"/>
    </cofactor>
</comment>
<comment type="subunit">
    <text>Dimer of alpha and beta chains. A typical microtubule is a hollow water-filled tube with an outer diameter of 25 nm and an inner diameter of 15 nM. Alpha-beta heterodimers associate head-to-tail to form protofilaments running lengthwise along the microtubule wall with the beta-tubulin subunit facing the microtubule plus end conferring a structural polarity. Microtubules usually have 13 protofilaments but different protofilament numbers can be found in some organisms and specialized cells.</text>
</comment>
<comment type="subcellular location">
    <subcellularLocation>
        <location>Cytoplasm</location>
        <location>Cytoskeleton</location>
    </subcellularLocation>
</comment>
<comment type="PTM">
    <text evidence="3">Some glutamate residues at the C-terminus are polyglycylated, resulting in polyglycine chains on the gamma-carboxyl group. Glycylation is mainly limited to tubulin incorporated into axonemes (cilia and flagella) whereas glutamylation is prevalent in neuronal cells, centrioles, axonemes, and the mitotic spindle. Both modifications can coexist on the same protein on adjacent residues, and lowering polyglycylation levels increases polyglutamylation, and reciprocally. The precise function of polyglycylation is still unclear.</text>
</comment>
<comment type="PTM">
    <text evidence="3 4">Some glutamate residues at the C-terminus are polyglutamylated, resulting in polyglutamate chains on the gamma-carboxyl group (By similarity). Polyglutamylation plays a key role in microtubule severing by spastin (SPAST). SPAST preferentially recognizes and acts on microtubules decorated with short polyglutamate tails: severing activity by SPAST increases as the number of glutamates per tubulin rises from one to eight, but decreases beyond this glutamylation threshold (By similarity).</text>
</comment>
<comment type="PTM">
    <text evidence="4">Acetylation of alpha chains at Lys-40 is located inside the microtubule lumen. This modification has been correlated with increased microtubule stability, intracellular transport and ciliary assembly.</text>
</comment>
<comment type="PTM">
    <text evidence="3 4">Undergoes a tyrosination/detyrosination cycle, the cyclic removal and re-addition of a C-terminal tyrosine residue by the enzymes tubulin tyrosine carboxypeptidase (MATCAP, VASH1 or VASH2) and tubulin tyrosine ligase (TTL), respectively.</text>
</comment>
<comment type="PTM">
    <molecule>Tubulin alpha chain</molecule>
    <text evidence="3 4">Tyrosination promotes microtubule interaction with CAP-Gly microtubule plus-end tracking proteins. Tyrosinated tubulins regulate the initiation of dynein-driven motility.</text>
</comment>
<comment type="PTM">
    <molecule>Detyrosinated tubulin alpha chain</molecule>
    <text evidence="3 4">Detyrosination is involved in metaphase plate congression by guiding chromosomes during mitosis (By similarity). Detyrosination increases microtubules-dependent mechanotransduction in dystrophic cardiac and skeletal muscle. In cardiomyocytes, detyrosinated microtubules are required to resist to contractile compression during contraction (By similarity).</text>
</comment>
<comment type="similarity">
    <text evidence="6">Belongs to the tubulin family.</text>
</comment>
<comment type="sequence caution" evidence="6">
    <conflict type="erroneous initiation">
        <sequence resource="EMBL-CDS" id="CAA47384"/>
    </conflict>
    <text>Truncated N-terminus.</text>
</comment>
<feature type="chain" id="PRO_0000048204" description="Tubulin alpha chain">
    <location>
        <begin position="1"/>
        <end position="450"/>
    </location>
</feature>
<feature type="chain" id="PRO_0000437406" description="Detyrosinated tubulin alpha chain" evidence="4">
    <location>
        <begin position="1"/>
        <end position="449"/>
    </location>
</feature>
<feature type="region of interest" description="Disordered" evidence="5">
    <location>
        <begin position="431"/>
        <end position="450"/>
    </location>
</feature>
<feature type="active site" evidence="2">
    <location>
        <position position="254"/>
    </location>
</feature>
<feature type="binding site" evidence="2">
    <location>
        <position position="11"/>
    </location>
    <ligand>
        <name>GTP</name>
        <dbReference type="ChEBI" id="CHEBI:37565"/>
    </ligand>
</feature>
<feature type="binding site" evidence="2">
    <location>
        <position position="71"/>
    </location>
    <ligand>
        <name>GTP</name>
        <dbReference type="ChEBI" id="CHEBI:37565"/>
    </ligand>
</feature>
<feature type="binding site" evidence="2">
    <location>
        <position position="71"/>
    </location>
    <ligand>
        <name>Mg(2+)</name>
        <dbReference type="ChEBI" id="CHEBI:18420"/>
    </ligand>
</feature>
<feature type="binding site" evidence="2">
    <location>
        <position position="140"/>
    </location>
    <ligand>
        <name>GTP</name>
        <dbReference type="ChEBI" id="CHEBI:37565"/>
    </ligand>
</feature>
<feature type="binding site" evidence="2">
    <location>
        <position position="144"/>
    </location>
    <ligand>
        <name>GTP</name>
        <dbReference type="ChEBI" id="CHEBI:37565"/>
    </ligand>
</feature>
<feature type="binding site" evidence="2">
    <location>
        <position position="145"/>
    </location>
    <ligand>
        <name>GTP</name>
        <dbReference type="ChEBI" id="CHEBI:37565"/>
    </ligand>
</feature>
<feature type="binding site" evidence="2">
    <location>
        <position position="179"/>
    </location>
    <ligand>
        <name>GTP</name>
        <dbReference type="ChEBI" id="CHEBI:37565"/>
    </ligand>
</feature>
<feature type="binding site" evidence="2">
    <location>
        <position position="206"/>
    </location>
    <ligand>
        <name>GTP</name>
        <dbReference type="ChEBI" id="CHEBI:37565"/>
    </ligand>
</feature>
<feature type="binding site" evidence="2">
    <location>
        <position position="228"/>
    </location>
    <ligand>
        <name>GTP</name>
        <dbReference type="ChEBI" id="CHEBI:37565"/>
    </ligand>
</feature>
<feature type="site" description="Involved in polymerization">
    <location>
        <position position="450"/>
    </location>
</feature>
<feature type="modified residue" description="N6-acetyllysine" evidence="1 4">
    <location>
        <position position="40"/>
    </location>
</feature>
<evidence type="ECO:0000250" key="1">
    <source>
        <dbReference type="UniProtKB" id="P41351"/>
    </source>
</evidence>
<evidence type="ECO:0000250" key="2">
    <source>
        <dbReference type="UniProtKB" id="P68363"/>
    </source>
</evidence>
<evidence type="ECO:0000250" key="3">
    <source>
        <dbReference type="UniProtKB" id="P68369"/>
    </source>
</evidence>
<evidence type="ECO:0000250" key="4">
    <source>
        <dbReference type="UniProtKB" id="Q71U36"/>
    </source>
</evidence>
<evidence type="ECO:0000256" key="5">
    <source>
        <dbReference type="SAM" id="MobiDB-lite"/>
    </source>
</evidence>
<evidence type="ECO:0000305" key="6"/>
<keyword id="KW-0007">Acetylation</keyword>
<keyword id="KW-0963">Cytoplasm</keyword>
<keyword id="KW-0206">Cytoskeleton</keyword>
<keyword id="KW-0342">GTP-binding</keyword>
<keyword id="KW-0378">Hydrolase</keyword>
<keyword id="KW-0460">Magnesium</keyword>
<keyword id="KW-0479">Metal-binding</keyword>
<keyword id="KW-0493">Microtubule</keyword>
<keyword id="KW-0547">Nucleotide-binding</keyword>
<sequence>MREVISMHVGQAGVQMGNACWELYCLEHGIQPDGQMPSDKTCGGGDDSFNTFFSETGAGKHVPRAIFVDLEPTVIDEVRTGIYRQLFHPEQLITGKEDAANNYARGHYTIGKEIIDIVLDRTRKLADQCTGLQGFLIFHSFGGGTGSGFTSLLMERLSVDYGKKSKLEFAVYPAPQVSTAVVEPYNSILTTHTTLEHSDCAFMVDNEAIYDICRRNLDIERPSYTNLNRLIGQIVSSITASLRFDGALNVDLTEFQTNLVPYPRIHFPLATYAPVISAEKAYHEQLSVADITNACFEPANQMVKCDPRHGKYMACCLLYRGDVVPKDVNSAIAAIKTKRSIQFVDWCPTGFKVGINYQPPTVVPGGDLAKVQRAVCMLSNTTAIAEAWARLDHKFDLMYAKRAFVHWYVGEGMEEGEFSEAREDMAALEKDYEEVGTDSVGEEDEEGEEY</sequence>
<dbReference type="EC" id="3.6.5.-" evidence="2"/>
<dbReference type="EMBL" id="X66973">
    <property type="protein sequence ID" value="CAA47384.1"/>
    <property type="status" value="ALT_INIT"/>
    <property type="molecule type" value="mRNA"/>
</dbReference>
<dbReference type="PIR" id="A56635">
    <property type="entry name" value="A56635"/>
</dbReference>
<dbReference type="PIR" id="S25004">
    <property type="entry name" value="S25004"/>
</dbReference>
<dbReference type="SMR" id="P30436"/>
<dbReference type="GO" id="GO:0005737">
    <property type="term" value="C:cytoplasm"/>
    <property type="evidence" value="ECO:0007669"/>
    <property type="project" value="UniProtKB-KW"/>
</dbReference>
<dbReference type="GO" id="GO:0005874">
    <property type="term" value="C:microtubule"/>
    <property type="evidence" value="ECO:0007669"/>
    <property type="project" value="UniProtKB-KW"/>
</dbReference>
<dbReference type="GO" id="GO:0005525">
    <property type="term" value="F:GTP binding"/>
    <property type="evidence" value="ECO:0007669"/>
    <property type="project" value="UniProtKB-KW"/>
</dbReference>
<dbReference type="GO" id="GO:0016787">
    <property type="term" value="F:hydrolase activity"/>
    <property type="evidence" value="ECO:0007669"/>
    <property type="project" value="UniProtKB-KW"/>
</dbReference>
<dbReference type="GO" id="GO:0046872">
    <property type="term" value="F:metal ion binding"/>
    <property type="evidence" value="ECO:0007669"/>
    <property type="project" value="UniProtKB-KW"/>
</dbReference>
<dbReference type="GO" id="GO:0005200">
    <property type="term" value="F:structural constituent of cytoskeleton"/>
    <property type="evidence" value="ECO:0007669"/>
    <property type="project" value="InterPro"/>
</dbReference>
<dbReference type="GO" id="GO:0007017">
    <property type="term" value="P:microtubule-based process"/>
    <property type="evidence" value="ECO:0007669"/>
    <property type="project" value="InterPro"/>
</dbReference>
<dbReference type="CDD" id="cd02186">
    <property type="entry name" value="alpha_tubulin"/>
    <property type="match status" value="1"/>
</dbReference>
<dbReference type="FunFam" id="1.10.287.600:FF:000005">
    <property type="entry name" value="Tubulin alpha chain"/>
    <property type="match status" value="1"/>
</dbReference>
<dbReference type="FunFam" id="3.30.1330.20:FF:000001">
    <property type="entry name" value="Tubulin alpha chain"/>
    <property type="match status" value="1"/>
</dbReference>
<dbReference type="FunFam" id="3.40.50.1440:FF:000002">
    <property type="entry name" value="Tubulin alpha chain"/>
    <property type="match status" value="1"/>
</dbReference>
<dbReference type="Gene3D" id="1.10.287.600">
    <property type="entry name" value="Helix hairpin bin"/>
    <property type="match status" value="1"/>
</dbReference>
<dbReference type="Gene3D" id="3.30.1330.20">
    <property type="entry name" value="Tubulin/FtsZ, C-terminal domain"/>
    <property type="match status" value="1"/>
</dbReference>
<dbReference type="Gene3D" id="3.40.50.1440">
    <property type="entry name" value="Tubulin/FtsZ, GTPase domain"/>
    <property type="match status" value="1"/>
</dbReference>
<dbReference type="InterPro" id="IPR002452">
    <property type="entry name" value="Alpha_tubulin"/>
</dbReference>
<dbReference type="InterPro" id="IPR008280">
    <property type="entry name" value="Tub_FtsZ_C"/>
</dbReference>
<dbReference type="InterPro" id="IPR000217">
    <property type="entry name" value="Tubulin"/>
</dbReference>
<dbReference type="InterPro" id="IPR037103">
    <property type="entry name" value="Tubulin/FtsZ-like_C"/>
</dbReference>
<dbReference type="InterPro" id="IPR018316">
    <property type="entry name" value="Tubulin/FtsZ_2-layer-sand-dom"/>
</dbReference>
<dbReference type="InterPro" id="IPR036525">
    <property type="entry name" value="Tubulin/FtsZ_GTPase_sf"/>
</dbReference>
<dbReference type="InterPro" id="IPR023123">
    <property type="entry name" value="Tubulin_C"/>
</dbReference>
<dbReference type="InterPro" id="IPR017975">
    <property type="entry name" value="Tubulin_CS"/>
</dbReference>
<dbReference type="InterPro" id="IPR003008">
    <property type="entry name" value="Tubulin_FtsZ_GTPase"/>
</dbReference>
<dbReference type="PANTHER" id="PTHR11588">
    <property type="entry name" value="TUBULIN"/>
    <property type="match status" value="1"/>
</dbReference>
<dbReference type="Pfam" id="PF00091">
    <property type="entry name" value="Tubulin"/>
    <property type="match status" value="1"/>
</dbReference>
<dbReference type="Pfam" id="PF03953">
    <property type="entry name" value="Tubulin_C"/>
    <property type="match status" value="1"/>
</dbReference>
<dbReference type="PRINTS" id="PR01162">
    <property type="entry name" value="ALPHATUBULIN"/>
</dbReference>
<dbReference type="PRINTS" id="PR01161">
    <property type="entry name" value="TUBULIN"/>
</dbReference>
<dbReference type="SMART" id="SM00864">
    <property type="entry name" value="Tubulin"/>
    <property type="match status" value="1"/>
</dbReference>
<dbReference type="SMART" id="SM00865">
    <property type="entry name" value="Tubulin_C"/>
    <property type="match status" value="1"/>
</dbReference>
<dbReference type="SUPFAM" id="SSF55307">
    <property type="entry name" value="Tubulin C-terminal domain-like"/>
    <property type="match status" value="1"/>
</dbReference>
<dbReference type="SUPFAM" id="SSF52490">
    <property type="entry name" value="Tubulin nucleotide-binding domain-like"/>
    <property type="match status" value="1"/>
</dbReference>
<dbReference type="PROSITE" id="PS00227">
    <property type="entry name" value="TUBULIN"/>
    <property type="match status" value="1"/>
</dbReference>
<proteinExistence type="evidence at transcript level"/>
<protein>
    <recommendedName>
        <fullName>Tubulin alpha chain</fullName>
        <ecNumber evidence="2">3.6.5.-</ecNumber>
    </recommendedName>
    <component>
        <recommendedName>
            <fullName>Detyrosinated tubulin alpha chain</fullName>
        </recommendedName>
    </component>
</protein>
<reference key="1">
    <citation type="journal article" date="1992" name="DNA Seq.">
        <title>Isolation of different brain-specific isotypes of alpha-tubulins from chum salmon (Oncorhynchus keta).</title>
        <authorList>
            <person name="Coe I.R."/>
            <person name="Munro R."/>
            <person name="Sherwood N.M."/>
        </authorList>
    </citation>
    <scope>NUCLEOTIDE SEQUENCE [MRNA]</scope>
    <source>
        <tissue>Brain</tissue>
    </source>
</reference>
<accession>P30436</accession>